<protein>
    <recommendedName>
        <fullName>Pentatricopeptide repeat-containing protein At3g53700, chloroplastic</fullName>
    </recommendedName>
    <alternativeName>
        <fullName>Protein MATERNAL EFFECT EMBRYO ARREST 40</fullName>
    </alternativeName>
</protein>
<proteinExistence type="evidence at transcript level"/>
<accession>Q9LFF1</accession>
<organism>
    <name type="scientific">Arabidopsis thaliana</name>
    <name type="common">Mouse-ear cress</name>
    <dbReference type="NCBI Taxonomy" id="3702"/>
    <lineage>
        <taxon>Eukaryota</taxon>
        <taxon>Viridiplantae</taxon>
        <taxon>Streptophyta</taxon>
        <taxon>Embryophyta</taxon>
        <taxon>Tracheophyta</taxon>
        <taxon>Spermatophyta</taxon>
        <taxon>Magnoliopsida</taxon>
        <taxon>eudicotyledons</taxon>
        <taxon>Gunneridae</taxon>
        <taxon>Pentapetalae</taxon>
        <taxon>rosids</taxon>
        <taxon>malvids</taxon>
        <taxon>Brassicales</taxon>
        <taxon>Brassicaceae</taxon>
        <taxon>Camelineae</taxon>
        <taxon>Arabidopsis</taxon>
    </lineage>
</organism>
<dbReference type="EMBL" id="AL132960">
    <property type="status" value="NOT_ANNOTATED_CDS"/>
    <property type="molecule type" value="Genomic_DNA"/>
</dbReference>
<dbReference type="EMBL" id="AL132966">
    <property type="protein sequence ID" value="CAB67677.1"/>
    <property type="molecule type" value="Genomic_DNA"/>
</dbReference>
<dbReference type="EMBL" id="CP002686">
    <property type="protein sequence ID" value="AEE79129.1"/>
    <property type="molecule type" value="Genomic_DNA"/>
</dbReference>
<dbReference type="EMBL" id="AY057573">
    <property type="protein sequence ID" value="AAL09812.1"/>
    <property type="molecule type" value="mRNA"/>
</dbReference>
<dbReference type="PIR" id="T45910">
    <property type="entry name" value="T45910"/>
</dbReference>
<dbReference type="RefSeq" id="NP_190938.1">
    <property type="nucleotide sequence ID" value="NM_115230.3"/>
</dbReference>
<dbReference type="SMR" id="Q9LFF1"/>
<dbReference type="FunCoup" id="Q9LFF1">
    <property type="interactions" value="1651"/>
</dbReference>
<dbReference type="STRING" id="3702.Q9LFF1"/>
<dbReference type="PaxDb" id="3702-AT3G53700.1"/>
<dbReference type="ProteomicsDB" id="248962"/>
<dbReference type="EnsemblPlants" id="AT3G53700.1">
    <property type="protein sequence ID" value="AT3G53700.1"/>
    <property type="gene ID" value="AT3G53700"/>
</dbReference>
<dbReference type="GeneID" id="824537"/>
<dbReference type="Gramene" id="AT3G53700.1">
    <property type="protein sequence ID" value="AT3G53700.1"/>
    <property type="gene ID" value="AT3G53700"/>
</dbReference>
<dbReference type="KEGG" id="ath:AT3G53700"/>
<dbReference type="Araport" id="AT3G53700"/>
<dbReference type="TAIR" id="AT3G53700">
    <property type="gene designation" value="MEE40"/>
</dbReference>
<dbReference type="eggNOG" id="KOG4197">
    <property type="taxonomic scope" value="Eukaryota"/>
</dbReference>
<dbReference type="HOGENOM" id="CLU_002706_49_12_1"/>
<dbReference type="InParanoid" id="Q9LFF1"/>
<dbReference type="OMA" id="NGCARNV"/>
<dbReference type="PhylomeDB" id="Q9LFF1"/>
<dbReference type="PRO" id="PR:Q9LFF1"/>
<dbReference type="Proteomes" id="UP000006548">
    <property type="component" value="Chromosome 3"/>
</dbReference>
<dbReference type="ExpressionAtlas" id="Q9LFF1">
    <property type="expression patterns" value="baseline and differential"/>
</dbReference>
<dbReference type="GO" id="GO:0009507">
    <property type="term" value="C:chloroplast"/>
    <property type="evidence" value="ECO:0007005"/>
    <property type="project" value="TAIR"/>
</dbReference>
<dbReference type="GO" id="GO:0003729">
    <property type="term" value="F:mRNA binding"/>
    <property type="evidence" value="ECO:0000314"/>
    <property type="project" value="TAIR"/>
</dbReference>
<dbReference type="GO" id="GO:0009793">
    <property type="term" value="P:embryo development ending in seed dormancy"/>
    <property type="evidence" value="ECO:0000315"/>
    <property type="project" value="TAIR"/>
</dbReference>
<dbReference type="FunFam" id="1.25.40.10:FF:000294">
    <property type="entry name" value="Pentatricopeptide repeat-containing protein At1g09900"/>
    <property type="match status" value="2"/>
</dbReference>
<dbReference type="FunFam" id="1.25.40.10:FF:001069">
    <property type="entry name" value="Pentatricopeptide repeat-containing protein At3g53700, chloroplastic"/>
    <property type="match status" value="1"/>
</dbReference>
<dbReference type="FunFam" id="1.25.40.10:FF:001395">
    <property type="entry name" value="Pentatricopeptide repeat-containing protein At3g53700, chloroplastic"/>
    <property type="match status" value="1"/>
</dbReference>
<dbReference type="FunFam" id="1.25.40.10:FF:002101">
    <property type="entry name" value="Pentatricopeptide repeat-containing protein At3g53700, chloroplastic"/>
    <property type="match status" value="1"/>
</dbReference>
<dbReference type="FunFam" id="1.25.40.10:FF:002125">
    <property type="entry name" value="Pentatricopeptide repeat-containing protein At3g53700, chloroplastic"/>
    <property type="match status" value="1"/>
</dbReference>
<dbReference type="FunFam" id="1.25.40.10:FF:000579">
    <property type="entry name" value="Pentatricopeptide repeat-containing protein At5g39710"/>
    <property type="match status" value="1"/>
</dbReference>
<dbReference type="Gene3D" id="1.25.40.10">
    <property type="entry name" value="Tetratricopeptide repeat domain"/>
    <property type="match status" value="7"/>
</dbReference>
<dbReference type="InterPro" id="IPR051240">
    <property type="entry name" value="Mito_RNA-Proc/Resp"/>
</dbReference>
<dbReference type="InterPro" id="IPR002885">
    <property type="entry name" value="Pentatricopeptide_rpt"/>
</dbReference>
<dbReference type="InterPro" id="IPR011990">
    <property type="entry name" value="TPR-like_helical_dom_sf"/>
</dbReference>
<dbReference type="NCBIfam" id="TIGR00756">
    <property type="entry name" value="PPR"/>
    <property type="match status" value="13"/>
</dbReference>
<dbReference type="PANTHER" id="PTHR47933">
    <property type="entry name" value="PENTATRICOPEPTIDE REPEAT-CONTAINING PROTEIN 1, MITOCHONDRIAL"/>
    <property type="match status" value="1"/>
</dbReference>
<dbReference type="PANTHER" id="PTHR47933:SF11">
    <property type="entry name" value="PENTATRICOPEPTIDE REPEAT-CONTAINING PROTEIN 2"/>
    <property type="match status" value="1"/>
</dbReference>
<dbReference type="Pfam" id="PF13041">
    <property type="entry name" value="PPR_2"/>
    <property type="match status" value="7"/>
</dbReference>
<dbReference type="SUPFAM" id="SSF48452">
    <property type="entry name" value="TPR-like"/>
    <property type="match status" value="1"/>
</dbReference>
<dbReference type="PROSITE" id="PS51375">
    <property type="entry name" value="PPR"/>
    <property type="match status" value="17"/>
</dbReference>
<gene>
    <name type="primary">MEE40</name>
    <name type="ordered locus">At3g53700</name>
    <name type="ORF">F4P12_400</name>
    <name type="ORF">F5K20.2</name>
</gene>
<sequence>MAFSSCLKFYPFSISQAVTLTHHSFSLNLTPPSSTISFASPHSAALSSTDVKLLDSLRSQPDDSAALRLFNLASKKPNFSPEPALYEEILLRLGRSGSFDDMKKILEDMKSSRCEMGTSTFLILIESYAQFELQDEILSVVDWMIDEFGLKPDTHFYNRMLNLLVDGNSLKLVEISHAKMSVWGIKPDVSTFNVLIKALCRAHQLRPAILMLEDMPSYGLVPDEKTFTTVMQGYIEEGDLDGALRIREQMVEFGCSWSNVSVNVIVHGFCKEGRVEDALNFIQEMSNQDGFFPDQYTFNTLVNGLCKAGHVKHAIEIMDVMLQEGYDPDVYTYNSVISGLCKLGEVKEAVEVLDQMITRDCSPNTVTYNTLISTLCKENQVEEATELARVLTSKGILPDVCTFNSLIQGLCLTRNHRVAMELFEEMRSKGCEPDEFTYNMLIDSLCSKGKLDEALNMLKQMELSGCARSVITYNTLIDGFCKANKTREAEEIFDEMEVHGVSRNSVTYNTLIDGLCKSRRVEDAAQLMDQMIMEGQKPDKYTYNSLLTHFCRGGDIKKAADIVQAMTSNGCEPDIVTYGTLISGLCKAGRVEVASKLLRSIQMKGINLTPHAYNPVIQGLFRKRKTTEAINLFREMLEQNEAPPDAVSYRIVFRGLCNGGGPIREAVDFLVELLEKGFVPEFSSLYMLAEGLLTLSMEETLVKLVNMVMQKARFSEEEVSMVKGLLKIRKFQDALATLGGVLDSRQPRRTYRSR</sequence>
<keyword id="KW-0150">Chloroplast</keyword>
<keyword id="KW-0934">Plastid</keyword>
<keyword id="KW-1185">Reference proteome</keyword>
<keyword id="KW-0677">Repeat</keyword>
<keyword id="KW-0809">Transit peptide</keyword>
<evidence type="ECO:0000255" key="1"/>
<evidence type="ECO:0000269" key="2">
    <source>
    </source>
</evidence>
<evidence type="ECO:0000305" key="3"/>
<feature type="transit peptide" description="Chloroplast" evidence="1">
    <location>
        <begin position="1"/>
        <end position="72"/>
    </location>
</feature>
<feature type="chain" id="PRO_0000356140" description="Pentatricopeptide repeat-containing protein At3g53700, chloroplastic">
    <location>
        <begin position="73"/>
        <end position="754"/>
    </location>
</feature>
<feature type="repeat" description="PPR 1">
    <location>
        <begin position="82"/>
        <end position="116"/>
    </location>
</feature>
<feature type="repeat" description="PPR 2">
    <location>
        <begin position="117"/>
        <end position="152"/>
    </location>
</feature>
<feature type="repeat" description="PPR 3">
    <location>
        <begin position="153"/>
        <end position="187"/>
    </location>
</feature>
<feature type="repeat" description="PPR 4">
    <location>
        <begin position="188"/>
        <end position="222"/>
    </location>
</feature>
<feature type="repeat" description="PPR 5">
    <location>
        <begin position="223"/>
        <end position="257"/>
    </location>
</feature>
<feature type="repeat" description="PPR 6">
    <location>
        <begin position="258"/>
        <end position="288"/>
    </location>
</feature>
<feature type="repeat" description="PPR 7">
    <location>
        <begin position="294"/>
        <end position="328"/>
    </location>
</feature>
<feature type="repeat" description="PPR 8">
    <location>
        <begin position="329"/>
        <end position="363"/>
    </location>
</feature>
<feature type="repeat" description="PPR 9">
    <location>
        <begin position="364"/>
        <end position="398"/>
    </location>
</feature>
<feature type="repeat" description="PPR 10">
    <location>
        <begin position="399"/>
        <end position="433"/>
    </location>
</feature>
<feature type="repeat" description="PPR 11">
    <location>
        <begin position="434"/>
        <end position="468"/>
    </location>
</feature>
<feature type="repeat" description="PPR 12">
    <location>
        <begin position="469"/>
        <end position="503"/>
    </location>
</feature>
<feature type="repeat" description="PPR 13">
    <location>
        <begin position="504"/>
        <end position="538"/>
    </location>
</feature>
<feature type="repeat" description="PPR 14">
    <location>
        <begin position="539"/>
        <end position="573"/>
    </location>
</feature>
<feature type="repeat" description="PPR 15">
    <location>
        <begin position="574"/>
        <end position="608"/>
    </location>
</feature>
<feature type="repeat" description="PPR 16">
    <location>
        <begin position="609"/>
        <end position="643"/>
    </location>
</feature>
<feature type="repeat" description="PPR 17">
    <location>
        <begin position="645"/>
        <end position="680"/>
    </location>
</feature>
<comment type="function">
    <text evidence="2">May be involved in female gametophyte development.</text>
</comment>
<comment type="subcellular location">
    <subcellularLocation>
        <location evidence="3">Plastid</location>
        <location evidence="3">Chloroplast</location>
    </subcellularLocation>
</comment>
<comment type="similarity">
    <text evidence="3">Belongs to the PPR family. P subfamily.</text>
</comment>
<comment type="online information" name="Pentatricopeptide repeat proteins">
    <link uri="https://ppr.plantenergy.uwa.edu.au"/>
</comment>
<reference key="1">
    <citation type="journal article" date="2000" name="Nature">
        <title>Sequence and analysis of chromosome 3 of the plant Arabidopsis thaliana.</title>
        <authorList>
            <person name="Salanoubat M."/>
            <person name="Lemcke K."/>
            <person name="Rieger M."/>
            <person name="Ansorge W."/>
            <person name="Unseld M."/>
            <person name="Fartmann B."/>
            <person name="Valle G."/>
            <person name="Bloecker H."/>
            <person name="Perez-Alonso M."/>
            <person name="Obermaier B."/>
            <person name="Delseny M."/>
            <person name="Boutry M."/>
            <person name="Grivell L.A."/>
            <person name="Mache R."/>
            <person name="Puigdomenech P."/>
            <person name="De Simone V."/>
            <person name="Choisne N."/>
            <person name="Artiguenave F."/>
            <person name="Robert C."/>
            <person name="Brottier P."/>
            <person name="Wincker P."/>
            <person name="Cattolico L."/>
            <person name="Weissenbach J."/>
            <person name="Saurin W."/>
            <person name="Quetier F."/>
            <person name="Schaefer M."/>
            <person name="Mueller-Auer S."/>
            <person name="Gabel C."/>
            <person name="Fuchs M."/>
            <person name="Benes V."/>
            <person name="Wurmbach E."/>
            <person name="Drzonek H."/>
            <person name="Erfle H."/>
            <person name="Jordan N."/>
            <person name="Bangert S."/>
            <person name="Wiedelmann R."/>
            <person name="Kranz H."/>
            <person name="Voss H."/>
            <person name="Holland R."/>
            <person name="Brandt P."/>
            <person name="Nyakatura G."/>
            <person name="Vezzi A."/>
            <person name="D'Angelo M."/>
            <person name="Pallavicini A."/>
            <person name="Toppo S."/>
            <person name="Simionati B."/>
            <person name="Conrad A."/>
            <person name="Hornischer K."/>
            <person name="Kauer G."/>
            <person name="Loehnert T.-H."/>
            <person name="Nordsiek G."/>
            <person name="Reichelt J."/>
            <person name="Scharfe M."/>
            <person name="Schoen O."/>
            <person name="Bargues M."/>
            <person name="Terol J."/>
            <person name="Climent J."/>
            <person name="Navarro P."/>
            <person name="Collado C."/>
            <person name="Perez-Perez A."/>
            <person name="Ottenwaelder B."/>
            <person name="Duchemin D."/>
            <person name="Cooke R."/>
            <person name="Laudie M."/>
            <person name="Berger-Llauro C."/>
            <person name="Purnelle B."/>
            <person name="Masuy D."/>
            <person name="de Haan M."/>
            <person name="Maarse A.C."/>
            <person name="Alcaraz J.-P."/>
            <person name="Cottet A."/>
            <person name="Casacuberta E."/>
            <person name="Monfort A."/>
            <person name="Argiriou A."/>
            <person name="Flores M."/>
            <person name="Liguori R."/>
            <person name="Vitale D."/>
            <person name="Mannhaupt G."/>
            <person name="Haase D."/>
            <person name="Schoof H."/>
            <person name="Rudd S."/>
            <person name="Zaccaria P."/>
            <person name="Mewes H.-W."/>
            <person name="Mayer K.F.X."/>
            <person name="Kaul S."/>
            <person name="Town C.D."/>
            <person name="Koo H.L."/>
            <person name="Tallon L.J."/>
            <person name="Jenkins J."/>
            <person name="Rooney T."/>
            <person name="Rizzo M."/>
            <person name="Walts A."/>
            <person name="Utterback T."/>
            <person name="Fujii C.Y."/>
            <person name="Shea T.P."/>
            <person name="Creasy T.H."/>
            <person name="Haas B."/>
            <person name="Maiti R."/>
            <person name="Wu D."/>
            <person name="Peterson J."/>
            <person name="Van Aken S."/>
            <person name="Pai G."/>
            <person name="Militscher J."/>
            <person name="Sellers P."/>
            <person name="Gill J.E."/>
            <person name="Feldblyum T.V."/>
            <person name="Preuss D."/>
            <person name="Lin X."/>
            <person name="Nierman W.C."/>
            <person name="Salzberg S.L."/>
            <person name="White O."/>
            <person name="Venter J.C."/>
            <person name="Fraser C.M."/>
            <person name="Kaneko T."/>
            <person name="Nakamura Y."/>
            <person name="Sato S."/>
            <person name="Kato T."/>
            <person name="Asamizu E."/>
            <person name="Sasamoto S."/>
            <person name="Kimura T."/>
            <person name="Idesawa K."/>
            <person name="Kawashima K."/>
            <person name="Kishida Y."/>
            <person name="Kiyokawa C."/>
            <person name="Kohara M."/>
            <person name="Matsumoto M."/>
            <person name="Matsuno A."/>
            <person name="Muraki A."/>
            <person name="Nakayama S."/>
            <person name="Nakazaki N."/>
            <person name="Shinpo S."/>
            <person name="Takeuchi C."/>
            <person name="Wada T."/>
            <person name="Watanabe A."/>
            <person name="Yamada M."/>
            <person name="Yasuda M."/>
            <person name="Tabata S."/>
        </authorList>
    </citation>
    <scope>NUCLEOTIDE SEQUENCE [LARGE SCALE GENOMIC DNA]</scope>
    <source>
        <strain>cv. Columbia</strain>
    </source>
</reference>
<reference key="2">
    <citation type="journal article" date="2017" name="Plant J.">
        <title>Araport11: a complete reannotation of the Arabidopsis thaliana reference genome.</title>
        <authorList>
            <person name="Cheng C.Y."/>
            <person name="Krishnakumar V."/>
            <person name="Chan A.P."/>
            <person name="Thibaud-Nissen F."/>
            <person name="Schobel S."/>
            <person name="Town C.D."/>
        </authorList>
    </citation>
    <scope>GENOME REANNOTATION</scope>
    <source>
        <strain>cv. Columbia</strain>
    </source>
</reference>
<reference key="3">
    <citation type="journal article" date="2003" name="Science">
        <title>Empirical analysis of transcriptional activity in the Arabidopsis genome.</title>
        <authorList>
            <person name="Yamada K."/>
            <person name="Lim J."/>
            <person name="Dale J.M."/>
            <person name="Chen H."/>
            <person name="Shinn P."/>
            <person name="Palm C.J."/>
            <person name="Southwick A.M."/>
            <person name="Wu H.C."/>
            <person name="Kim C.J."/>
            <person name="Nguyen M."/>
            <person name="Pham P.K."/>
            <person name="Cheuk R.F."/>
            <person name="Karlin-Newmann G."/>
            <person name="Liu S.X."/>
            <person name="Lam B."/>
            <person name="Sakano H."/>
            <person name="Wu T."/>
            <person name="Yu G."/>
            <person name="Miranda M."/>
            <person name="Quach H.L."/>
            <person name="Tripp M."/>
            <person name="Chang C.H."/>
            <person name="Lee J.M."/>
            <person name="Toriumi M.J."/>
            <person name="Chan M.M."/>
            <person name="Tang C.C."/>
            <person name="Onodera C.S."/>
            <person name="Deng J.M."/>
            <person name="Akiyama K."/>
            <person name="Ansari Y."/>
            <person name="Arakawa T."/>
            <person name="Banh J."/>
            <person name="Banno F."/>
            <person name="Bowser L."/>
            <person name="Brooks S.Y."/>
            <person name="Carninci P."/>
            <person name="Chao Q."/>
            <person name="Choy N."/>
            <person name="Enju A."/>
            <person name="Goldsmith A.D."/>
            <person name="Gurjal M."/>
            <person name="Hansen N.F."/>
            <person name="Hayashizaki Y."/>
            <person name="Johnson-Hopson C."/>
            <person name="Hsuan V.W."/>
            <person name="Iida K."/>
            <person name="Karnes M."/>
            <person name="Khan S."/>
            <person name="Koesema E."/>
            <person name="Ishida J."/>
            <person name="Jiang P.X."/>
            <person name="Jones T."/>
            <person name="Kawai J."/>
            <person name="Kamiya A."/>
            <person name="Meyers C."/>
            <person name="Nakajima M."/>
            <person name="Narusaka M."/>
            <person name="Seki M."/>
            <person name="Sakurai T."/>
            <person name="Satou M."/>
            <person name="Tamse R."/>
            <person name="Vaysberg M."/>
            <person name="Wallender E.K."/>
            <person name="Wong C."/>
            <person name="Yamamura Y."/>
            <person name="Yuan S."/>
            <person name="Shinozaki K."/>
            <person name="Davis R.W."/>
            <person name="Theologis A."/>
            <person name="Ecker J.R."/>
        </authorList>
    </citation>
    <scope>NUCLEOTIDE SEQUENCE [LARGE SCALE MRNA]</scope>
    <source>
        <strain>cv. Columbia</strain>
    </source>
</reference>
<reference key="4">
    <citation type="journal article" date="2004" name="Plant Cell">
        <title>Genome-wide analysis of Arabidopsis pentatricopeptide repeat proteins reveals their essential role in organelle biogenesis.</title>
        <authorList>
            <person name="Lurin C."/>
            <person name="Andres C."/>
            <person name="Aubourg S."/>
            <person name="Bellaoui M."/>
            <person name="Bitton F."/>
            <person name="Bruyere C."/>
            <person name="Caboche M."/>
            <person name="Debast C."/>
            <person name="Gualberto J."/>
            <person name="Hoffmann B."/>
            <person name="Lecharny A."/>
            <person name="Le Ret M."/>
            <person name="Martin-Magniette M.-L."/>
            <person name="Mireau H."/>
            <person name="Peeters N."/>
            <person name="Renou J.-P."/>
            <person name="Szurek B."/>
            <person name="Taconnat L."/>
            <person name="Small I."/>
        </authorList>
    </citation>
    <scope>GENE FAMILY</scope>
</reference>
<reference key="5">
    <citation type="journal article" date="2005" name="Development">
        <title>Genetic and molecular identification of genes required for female gametophyte development and function in Arabidopsis.</title>
        <authorList>
            <person name="Pagnussat G.C."/>
            <person name="Yu H.-J."/>
            <person name="Ngo Q.A."/>
            <person name="Rajani S."/>
            <person name="Mayalagu S."/>
            <person name="Johnson C.S."/>
            <person name="Capron A."/>
            <person name="Xie L.-F."/>
            <person name="Ye D."/>
            <person name="Sundaresan V."/>
        </authorList>
    </citation>
    <scope>FUNCTION</scope>
</reference>
<name>PP281_ARATH</name>